<evidence type="ECO:0000250" key="1">
    <source>
        <dbReference type="UniProtKB" id="Q9NP94"/>
    </source>
</evidence>
<evidence type="ECO:0000255" key="2"/>
<evidence type="ECO:0000269" key="3">
    <source>
    </source>
</evidence>
<evidence type="ECO:0000269" key="4">
    <source>
    </source>
</evidence>
<evidence type="ECO:0000269" key="5">
    <source>
    </source>
</evidence>
<evidence type="ECO:0000305" key="6"/>
<evidence type="ECO:0000305" key="7">
    <source>
    </source>
</evidence>
<organism>
    <name type="scientific">Mus musculus</name>
    <name type="common">Mouse</name>
    <dbReference type="NCBI Taxonomy" id="10090"/>
    <lineage>
        <taxon>Eukaryota</taxon>
        <taxon>Metazoa</taxon>
        <taxon>Chordata</taxon>
        <taxon>Craniata</taxon>
        <taxon>Vertebrata</taxon>
        <taxon>Euteleostomi</taxon>
        <taxon>Mammalia</taxon>
        <taxon>Eutheria</taxon>
        <taxon>Euarchontoglires</taxon>
        <taxon>Glires</taxon>
        <taxon>Rodentia</taxon>
        <taxon>Myomorpha</taxon>
        <taxon>Muroidea</taxon>
        <taxon>Muridae</taxon>
        <taxon>Murinae</taxon>
        <taxon>Mus</taxon>
        <taxon>Mus</taxon>
    </lineage>
</organism>
<accession>G3X943</accession>
<accession>Q2HIZ9</accession>
<keyword id="KW-1003">Cell membrane</keyword>
<keyword id="KW-0406">Ion transport</keyword>
<keyword id="KW-0472">Membrane</keyword>
<keyword id="KW-0479">Metal-binding</keyword>
<keyword id="KW-1185">Reference proteome</keyword>
<keyword id="KW-0812">Transmembrane</keyword>
<keyword id="KW-1133">Transmembrane helix</keyword>
<keyword id="KW-0813">Transport</keyword>
<keyword id="KW-0862">Zinc</keyword>
<keyword id="KW-0864">Zinc transport</keyword>
<reference key="1">
    <citation type="journal article" date="2009" name="PLoS Biol.">
        <title>Lineage-specific biology revealed by a finished genome assembly of the mouse.</title>
        <authorList>
            <person name="Church D.M."/>
            <person name="Goodstadt L."/>
            <person name="Hillier L.W."/>
            <person name="Zody M.C."/>
            <person name="Goldstein S."/>
            <person name="She X."/>
            <person name="Bult C.J."/>
            <person name="Agarwala R."/>
            <person name="Cherry J.L."/>
            <person name="DiCuccio M."/>
            <person name="Hlavina W."/>
            <person name="Kapustin Y."/>
            <person name="Meric P."/>
            <person name="Maglott D."/>
            <person name="Birtle Z."/>
            <person name="Marques A.C."/>
            <person name="Graves T."/>
            <person name="Zhou S."/>
            <person name="Teague B."/>
            <person name="Potamousis K."/>
            <person name="Churas C."/>
            <person name="Place M."/>
            <person name="Herschleb J."/>
            <person name="Runnheim R."/>
            <person name="Forrest D."/>
            <person name="Amos-Landgraf J."/>
            <person name="Schwartz D.C."/>
            <person name="Cheng Z."/>
            <person name="Lindblad-Toh K."/>
            <person name="Eichler E.E."/>
            <person name="Ponting C.P."/>
        </authorList>
    </citation>
    <scope>NUCLEOTIDE SEQUENCE [LARGE SCALE GENOMIC DNA]</scope>
    <source>
        <strain>C57BL/6J</strain>
    </source>
</reference>
<reference key="2">
    <citation type="journal article" date="2004" name="Genome Res.">
        <title>The status, quality, and expansion of the NIH full-length cDNA project: the Mammalian Gene Collection (MGC).</title>
        <authorList>
            <consortium name="The MGC Project Team"/>
        </authorList>
    </citation>
    <scope>NUCLEOTIDE SEQUENCE [LARGE SCALE MRNA]</scope>
</reference>
<reference key="3">
    <citation type="journal article" date="2003" name="J. Biol. Chem.">
        <title>Structure, function, and regulation of a subfamily of mouse zinc transporter genes.</title>
        <authorList>
            <person name="Dufner-Beattie J."/>
            <person name="Langmade S.J."/>
            <person name="Wang F."/>
            <person name="Eide D."/>
            <person name="Andrews G.K."/>
        </authorList>
    </citation>
    <scope>FUNCTION</scope>
    <scope>TRANSPORTER ACTIVITY</scope>
    <scope>BIOPHYSICOCHEMICAL PROPERTIES</scope>
    <scope>TISSUE SPECIFICITY</scope>
</reference>
<reference key="4">
    <citation type="journal article" date="2007" name="Genesis">
        <title>Targeting of the mouse Slc39a2 (Zip2) gene reveals highly cell-specific patterns of expression, and unique functions in zinc, iron, and calcium homeostasis.</title>
        <authorList>
            <person name="Peters J.L."/>
            <person name="Dufner-Beattie J."/>
            <person name="Xu W."/>
            <person name="Geiser J."/>
            <person name="Lahner B."/>
            <person name="Salt D.E."/>
            <person name="Andrews G.K."/>
        </authorList>
    </citation>
    <scope>DISRUPTION PHENOTYPE</scope>
    <scope>TISSUE SPECIFICITY</scope>
</reference>
<reference key="5">
    <citation type="journal article" date="2014" name="J. Biol. Chem.">
        <title>ZIP2 protein, a zinc transporter, is associated with keratinocyte differentiation.</title>
        <authorList>
            <person name="Inoue Y."/>
            <person name="Hasegawa S."/>
            <person name="Ban S."/>
            <person name="Yamada T."/>
            <person name="Date Y."/>
            <person name="Mizutani H."/>
            <person name="Nakata S."/>
            <person name="Tanaka M."/>
            <person name="Hirashima N."/>
        </authorList>
    </citation>
    <scope>FUNCTION</scope>
    <scope>INDUCTION</scope>
</reference>
<protein>
    <recommendedName>
        <fullName>Zinc transporter ZIP2</fullName>
    </recommendedName>
    <alternativeName>
        <fullName>Solute carrier family 39 member 2</fullName>
    </alternativeName>
    <alternativeName>
        <fullName>Zrt- and Irt-like protein 2</fullName>
        <shortName>ZIP-2</shortName>
        <shortName>hZIP2</shortName>
    </alternativeName>
</protein>
<proteinExistence type="evidence at protein level"/>
<feature type="chain" id="PRO_0000458161" description="Zinc transporter ZIP2">
    <location>
        <begin position="1"/>
        <end position="309"/>
    </location>
</feature>
<feature type="topological domain" description="Extracellular" evidence="6">
    <location>
        <begin position="1"/>
        <end position="8"/>
    </location>
</feature>
<feature type="transmembrane region" description="Helical" evidence="2">
    <location>
        <begin position="9"/>
        <end position="29"/>
    </location>
</feature>
<feature type="topological domain" description="Cytoplasmic" evidence="6">
    <location>
        <begin position="30"/>
        <end position="43"/>
    </location>
</feature>
<feature type="transmembrane region" description="Helical" evidence="2">
    <location>
        <begin position="44"/>
        <end position="64"/>
    </location>
</feature>
<feature type="topological domain" description="Extracellular" evidence="6">
    <location>
        <begin position="65"/>
        <end position="103"/>
    </location>
</feature>
<feature type="transmembrane region" description="Helical" evidence="2">
    <location>
        <begin position="104"/>
        <end position="124"/>
    </location>
</feature>
<feature type="topological domain" description="Cytoplasmic" evidence="6">
    <location>
        <begin position="125"/>
        <end position="164"/>
    </location>
</feature>
<feature type="transmembrane region" description="Helical" evidence="2">
    <location>
        <begin position="165"/>
        <end position="185"/>
    </location>
</feature>
<feature type="topological domain" description="Extracellular" evidence="6">
    <location>
        <begin position="186"/>
        <end position="191"/>
    </location>
</feature>
<feature type="transmembrane region" description="Helical" evidence="2">
    <location>
        <begin position="192"/>
        <end position="212"/>
    </location>
</feature>
<feature type="topological domain" description="Cytoplasmic" evidence="6">
    <location>
        <begin position="213"/>
        <end position="225"/>
    </location>
</feature>
<feature type="transmembrane region" description="Helical" evidence="2">
    <location>
        <begin position="226"/>
        <end position="246"/>
    </location>
</feature>
<feature type="topological domain" description="Extracellular" evidence="6">
    <location>
        <begin position="247"/>
        <end position="258"/>
    </location>
</feature>
<feature type="transmembrane region" description="Helical" evidence="2">
    <location>
        <begin position="259"/>
        <end position="279"/>
    </location>
</feature>
<feature type="topological domain" description="Cytoplasmic" evidence="6">
    <location>
        <begin position="280"/>
        <end position="288"/>
    </location>
</feature>
<feature type="transmembrane region" description="Helical" evidence="2">
    <location>
        <begin position="289"/>
        <end position="309"/>
    </location>
</feature>
<feature type="binding site" evidence="1">
    <location>
        <position position="175"/>
    </location>
    <ligand>
        <name>Zn(2+)</name>
        <dbReference type="ChEBI" id="CHEBI:29105"/>
    </ligand>
</feature>
<feature type="binding site" evidence="1">
    <location>
        <position position="179"/>
    </location>
    <ligand>
        <name>Zn(2+)</name>
        <dbReference type="ChEBI" id="CHEBI:29105"/>
    </ligand>
</feature>
<feature type="binding site" evidence="1">
    <location>
        <position position="202"/>
    </location>
    <ligand>
        <name>Zn(2+)</name>
        <dbReference type="ChEBI" id="CHEBI:29105"/>
    </ligand>
</feature>
<feature type="binding site" evidence="1">
    <location>
        <position position="276"/>
    </location>
    <ligand>
        <name>Zn(2+)</name>
        <dbReference type="ChEBI" id="CHEBI:29105"/>
    </ligand>
</feature>
<feature type="site" description="Critical for the pH sensitivity" evidence="1">
    <location>
        <position position="63"/>
    </location>
</feature>
<feature type="sequence conflict" description="In Ref. 2; AAI13770." evidence="6" ref="2">
    <original>A</original>
    <variation>T</variation>
    <location>
        <position position="224"/>
    </location>
</feature>
<gene>
    <name type="primary">Slc39a2</name>
    <name type="synonym">Zip2</name>
</gene>
<dbReference type="EMBL" id="AC125087">
    <property type="status" value="NOT_ANNOTATED_CDS"/>
    <property type="molecule type" value="Genomic_DNA"/>
</dbReference>
<dbReference type="EMBL" id="BC113769">
    <property type="protein sequence ID" value="AAI13770.1"/>
    <property type="molecule type" value="mRNA"/>
</dbReference>
<dbReference type="CCDS" id="CCDS36914.1"/>
<dbReference type="RefSeq" id="NP_001034765.2">
    <property type="nucleotide sequence ID" value="NM_001039676.2"/>
</dbReference>
<dbReference type="SMR" id="G3X943"/>
<dbReference type="FunCoup" id="G3X943">
    <property type="interactions" value="82"/>
</dbReference>
<dbReference type="STRING" id="10090.ENSMUSP00000038707"/>
<dbReference type="PaxDb" id="10090-ENSMUSP00000038707"/>
<dbReference type="ProteomicsDB" id="344833"/>
<dbReference type="Antibodypedia" id="22081">
    <property type="antibodies" value="85 antibodies from 27 providers"/>
</dbReference>
<dbReference type="Ensembl" id="ENSMUST00000047726.12">
    <property type="protein sequence ID" value="ENSMUSP00000038707.6"/>
    <property type="gene ID" value="ENSMUSG00000072572.10"/>
</dbReference>
<dbReference type="GeneID" id="214922"/>
<dbReference type="KEGG" id="mmu:214922"/>
<dbReference type="UCSC" id="uc007tnj.2">
    <property type="organism name" value="mouse"/>
</dbReference>
<dbReference type="AGR" id="MGI:2684326"/>
<dbReference type="CTD" id="29986"/>
<dbReference type="MGI" id="MGI:2684326">
    <property type="gene designation" value="Slc39a2"/>
</dbReference>
<dbReference type="VEuPathDB" id="HostDB:ENSMUSG00000072572"/>
<dbReference type="eggNOG" id="KOG1558">
    <property type="taxonomic scope" value="Eukaryota"/>
</dbReference>
<dbReference type="GeneTree" id="ENSGT00940000160962"/>
<dbReference type="HOGENOM" id="CLU_040462_1_0_1"/>
<dbReference type="InParanoid" id="G3X943"/>
<dbReference type="OMA" id="EEWGGTH"/>
<dbReference type="OrthoDB" id="448280at2759"/>
<dbReference type="PhylomeDB" id="G3X943"/>
<dbReference type="TreeFam" id="TF317098"/>
<dbReference type="Reactome" id="R-MMU-442380">
    <property type="pathway name" value="Zinc influx into cells by the SLC39 gene family"/>
</dbReference>
<dbReference type="BioGRID-ORCS" id="214922">
    <property type="hits" value="6 hits in 76 CRISPR screens"/>
</dbReference>
<dbReference type="PRO" id="PR:G3X943"/>
<dbReference type="Proteomes" id="UP000000589">
    <property type="component" value="Chromosome 14"/>
</dbReference>
<dbReference type="RNAct" id="G3X943">
    <property type="molecule type" value="protein"/>
</dbReference>
<dbReference type="Bgee" id="ENSMUSG00000072572">
    <property type="expression patterns" value="Expressed in uterine cervix and 80 other cell types or tissues"/>
</dbReference>
<dbReference type="GO" id="GO:0036464">
    <property type="term" value="C:cytoplasmic ribonucleoprotein granule"/>
    <property type="evidence" value="ECO:0007669"/>
    <property type="project" value="Ensembl"/>
</dbReference>
<dbReference type="GO" id="GO:0031410">
    <property type="term" value="C:cytoplasmic vesicle"/>
    <property type="evidence" value="ECO:0007669"/>
    <property type="project" value="Ensembl"/>
</dbReference>
<dbReference type="GO" id="GO:0005886">
    <property type="term" value="C:plasma membrane"/>
    <property type="evidence" value="ECO:0000314"/>
    <property type="project" value="UniProtKB"/>
</dbReference>
<dbReference type="GO" id="GO:0046872">
    <property type="term" value="F:metal ion binding"/>
    <property type="evidence" value="ECO:0007669"/>
    <property type="project" value="UniProtKB-KW"/>
</dbReference>
<dbReference type="GO" id="GO:0005385">
    <property type="term" value="F:zinc ion transmembrane transporter activity"/>
    <property type="evidence" value="ECO:0000314"/>
    <property type="project" value="MGI"/>
</dbReference>
<dbReference type="GO" id="GO:0070574">
    <property type="term" value="P:cadmium ion transmembrane transport"/>
    <property type="evidence" value="ECO:0000250"/>
    <property type="project" value="UniProtKB"/>
</dbReference>
<dbReference type="GO" id="GO:0030216">
    <property type="term" value="P:keratinocyte differentiation"/>
    <property type="evidence" value="ECO:0000315"/>
    <property type="project" value="UniProtKB"/>
</dbReference>
<dbReference type="GO" id="GO:0071577">
    <property type="term" value="P:zinc ion transmembrane transport"/>
    <property type="evidence" value="ECO:0000314"/>
    <property type="project" value="UniProtKB"/>
</dbReference>
<dbReference type="GO" id="GO:0006829">
    <property type="term" value="P:zinc ion transport"/>
    <property type="evidence" value="ECO:0000314"/>
    <property type="project" value="MGI"/>
</dbReference>
<dbReference type="InterPro" id="IPR003689">
    <property type="entry name" value="ZIP"/>
</dbReference>
<dbReference type="PANTHER" id="PTHR11040:SF120">
    <property type="entry name" value="ZINC TRANSPORTER ZIP2"/>
    <property type="match status" value="1"/>
</dbReference>
<dbReference type="PANTHER" id="PTHR11040">
    <property type="entry name" value="ZINC/IRON TRANSPORTER"/>
    <property type="match status" value="1"/>
</dbReference>
<dbReference type="Pfam" id="PF02535">
    <property type="entry name" value="Zip"/>
    <property type="match status" value="1"/>
</dbReference>
<comment type="function">
    <text evidence="1 3 5">Transporter for the divalent cation Zn(2+). Mediates the influx of Zn(2+) into cells from extracellular space (PubMed:14525987). The Zn(2+) uniporter activity is independent of H(+)-driving force, but is modulated by extracellular pH and membrane potential. Transports also other divalent cations Zn(2+), Cd2(+), Cu2(+), Co2(+) in the order of decreasing affinity, respectively (By similarity). In the skin, aids in the differentiation of keratinocytes in the epidermis (PubMed:24936057).</text>
</comment>
<comment type="catalytic activity">
    <reaction evidence="3">
        <text>Zn(2+)(in) = Zn(2+)(out)</text>
        <dbReference type="Rhea" id="RHEA:29351"/>
        <dbReference type="ChEBI" id="CHEBI:29105"/>
    </reaction>
    <physiologicalReaction direction="right-to-left" evidence="7">
        <dbReference type="Rhea" id="RHEA:29353"/>
    </physiologicalReaction>
</comment>
<comment type="catalytic activity">
    <reaction evidence="1">
        <text>Cd(2+)(in) = Cd(2+)(out)</text>
        <dbReference type="Rhea" id="RHEA:28707"/>
        <dbReference type="ChEBI" id="CHEBI:48775"/>
    </reaction>
</comment>
<comment type="biophysicochemical properties">
    <kinetics>
        <KM evidence="3">1.6 uM for Zn(2+)</KM>
    </kinetics>
</comment>
<comment type="subcellular location">
    <subcellularLocation>
        <location evidence="1">Cell membrane</location>
        <topology evidence="2">Multi-pass membrane protein</topology>
    </subcellularLocation>
</comment>
<comment type="tissue specificity">
    <text evidence="3 4">High expression in the liver, skin and ovary.</text>
</comment>
<comment type="induction">
    <text evidence="5">Up-regulated upon the induction of differentiation in cultured keratinocytes.</text>
</comment>
<comment type="disruption phenotype">
    <text evidence="4">Deficient mice do not reveal any specific phenotype, however these mice are more susceptible to abnormal embryonic development because of zinc deficiency during pregnancy.</text>
</comment>
<comment type="similarity">
    <text evidence="6">Belongs to the ZIP transporter (TC 2.A.5) family.</text>
</comment>
<comment type="caution">
    <text evidence="1">It was previously proposed that SLC39A2 operates as a Zn2(+)/HCO3(-) symport mechanism (By similarity). However in more recent studies, SLC39A2-mediated transport is independent of both HCO3(-) and H(+)-driving forces, but modulated by extracellular pH and voltage (By similarity).</text>
</comment>
<sequence>MEVLLGVKIGCLLALLVLTLGCGLTPIYVKWFQMDAATGHHHRVLSLLGCTSAGVFLGAGLMHMTAEALEGIESEIQKFVEQNSTGSKGNSSRDAASSYVEYPYGELVISLGFFFVFLLESLALQCCHGAAGGSTVQEEEWGGTHAFGFHKHPAVPSPSRGPLRALVLLLSLSFHSVFEGLAVGLQATVAATIQLCVAVLAHKGLVVFSVGLRLGKIGTGPRWATFCILSLALMSPVGLALGLTVAGGASGQTQGLAQAVLEGIAAGTFLYVTFLEILPRELACPEAPLAKYSCVAAGFAFMALIALWA</sequence>
<name>S39A2_MOUSE</name>